<accession>B3EWT1</accession>
<reference key="1">
    <citation type="journal article" date="2012" name="FEBS J.">
        <title>Multicomponent venom of the spider Cupiennius salei: a bioanalytical investigation applying different strategies.</title>
        <authorList>
            <person name="Trachsel C."/>
            <person name="Siegemund D."/>
            <person name="Kampfer U."/>
            <person name="Kopp L.S."/>
            <person name="Buhr C."/>
            <person name="Grossmann J."/>
            <person name="Luthi C."/>
            <person name="Cunningham M."/>
            <person name="Nentwig W."/>
            <person name="Kuhn-Nentwig L."/>
            <person name="Schurch S."/>
            <person name="Schaller J."/>
        </authorList>
    </citation>
    <scope>PROTEIN SEQUENCE</scope>
    <scope>MASS SPECTROMETRY</scope>
    <scope>SUBCELLULAR LOCATION</scope>
    <source>
        <tissue>Venom</tissue>
    </source>
</reference>
<keyword id="KW-0027">Amidation</keyword>
<keyword id="KW-0108">Calcium channel impairing toxin</keyword>
<keyword id="KW-0204">Cytolysis</keyword>
<keyword id="KW-0903">Direct protein sequencing</keyword>
<keyword id="KW-1015">Disulfide bond</keyword>
<keyword id="KW-0872">Ion channel impairing toxin</keyword>
<keyword id="KW-0960">Knottin</keyword>
<keyword id="KW-0472">Membrane</keyword>
<keyword id="KW-0528">Neurotoxin</keyword>
<keyword id="KW-0964">Secreted</keyword>
<keyword id="KW-1052">Target cell membrane</keyword>
<keyword id="KW-1053">Target membrane</keyword>
<keyword id="KW-0800">Toxin</keyword>
<keyword id="KW-1218">Voltage-gated calcium channel impairing toxin</keyword>
<proteinExistence type="evidence at protein level"/>
<comment type="function">
    <text evidence="2">Spider venom toxin that shows calcium channel blocking activity and exhibits cytolytic activity by affecting the outer leaflet curvature and/or pore formation across the membrane. It blocks L-type calcium channels (Cav1/CACNA1) in mammalian neurons at nanomolar concentrations. Furthermore, it produces a slow voltage-independent block of mid/low and high voltage-activated calcium channels in cockroach neurons. Potassium ions, histamine, M-ctenitoxin-Cs1a (AC P83619), CSTX-9 (AC P58604), and CSTX-13 (AC P83919) synergistically increase the insecticidal activity of this toxin. In vivo, it causes paralysis in blow flies and provokes death in drosophila.</text>
</comment>
<comment type="subcellular location">
    <subcellularLocation>
        <location evidence="4">Secreted</location>
    </subcellularLocation>
    <subcellularLocation>
        <location evidence="2">Target cell membrane</location>
    </subcellularLocation>
</comment>
<comment type="tissue specificity">
    <text evidence="6">Expressed by the venom gland.</text>
</comment>
<comment type="domain">
    <text evidence="1">The presence of a 'disulfide through disulfide knot' structurally defines this protein as a knottin.</text>
</comment>
<comment type="mass spectrometry" mass="8068.747" method="Electrospray" evidence="4"/>
<comment type="similarity">
    <text evidence="3">Belongs to the neurotoxin 19 (CSTX) family.</text>
</comment>
<protein>
    <recommendedName>
        <fullName evidence="5">Toxin CSTX-11</fullName>
    </recommendedName>
</protein>
<organism>
    <name type="scientific">Cupiennius salei</name>
    <name type="common">American wandering spider</name>
    <dbReference type="NCBI Taxonomy" id="6928"/>
    <lineage>
        <taxon>Eukaryota</taxon>
        <taxon>Metazoa</taxon>
        <taxon>Ecdysozoa</taxon>
        <taxon>Arthropoda</taxon>
        <taxon>Chelicerata</taxon>
        <taxon>Arachnida</taxon>
        <taxon>Araneae</taxon>
        <taxon>Araneomorphae</taxon>
        <taxon>Entelegynae</taxon>
        <taxon>Lycosoidea</taxon>
        <taxon>Ctenidae</taxon>
        <taxon>Cupiennius</taxon>
    </lineage>
</organism>
<sequence length="69" mass="8083">KDKENCIGKHHECTDDRDSCCKGKLFRYQCQCFKVIDGKKETKRCACVTPLHYKMAEMAVSVFKKMFKN</sequence>
<evidence type="ECO:0000250" key="1">
    <source>
        <dbReference type="UniProtKB" id="P58604"/>
    </source>
</evidence>
<evidence type="ECO:0000250" key="2">
    <source>
        <dbReference type="UniProtKB" id="P81694"/>
    </source>
</evidence>
<evidence type="ECO:0000255" key="3"/>
<evidence type="ECO:0000269" key="4">
    <source>
    </source>
</evidence>
<evidence type="ECO:0000303" key="5">
    <source>
    </source>
</evidence>
<evidence type="ECO:0000305" key="6">
    <source>
    </source>
</evidence>
<name>TXC11_CUPSA</name>
<feature type="peptide" id="PRO_0000421180" description="Toxin CSTX-11" evidence="4">
    <location>
        <begin position="1"/>
        <end position="69"/>
    </location>
</feature>
<feature type="disulfide bond" evidence="1">
    <location>
        <begin position="6"/>
        <end position="21"/>
    </location>
</feature>
<feature type="disulfide bond" evidence="1">
    <location>
        <begin position="13"/>
        <end position="30"/>
    </location>
</feature>
<feature type="disulfide bond" evidence="1">
    <location>
        <begin position="20"/>
        <end position="47"/>
    </location>
</feature>
<feature type="disulfide bond" evidence="1">
    <location>
        <begin position="32"/>
        <end position="45"/>
    </location>
</feature>
<dbReference type="SMR" id="B3EWT1"/>
<dbReference type="GO" id="GO:0005576">
    <property type="term" value="C:extracellular region"/>
    <property type="evidence" value="ECO:0007669"/>
    <property type="project" value="UniProtKB-SubCell"/>
</dbReference>
<dbReference type="GO" id="GO:0016020">
    <property type="term" value="C:membrane"/>
    <property type="evidence" value="ECO:0007669"/>
    <property type="project" value="UniProtKB-KW"/>
</dbReference>
<dbReference type="GO" id="GO:0044218">
    <property type="term" value="C:other organism cell membrane"/>
    <property type="evidence" value="ECO:0007669"/>
    <property type="project" value="UniProtKB-KW"/>
</dbReference>
<dbReference type="GO" id="GO:0005246">
    <property type="term" value="F:calcium channel regulator activity"/>
    <property type="evidence" value="ECO:0007669"/>
    <property type="project" value="UniProtKB-KW"/>
</dbReference>
<dbReference type="GO" id="GO:0090729">
    <property type="term" value="F:toxin activity"/>
    <property type="evidence" value="ECO:0007669"/>
    <property type="project" value="UniProtKB-KW"/>
</dbReference>
<dbReference type="GO" id="GO:0031640">
    <property type="term" value="P:killing of cells of another organism"/>
    <property type="evidence" value="ECO:0007669"/>
    <property type="project" value="UniProtKB-KW"/>
</dbReference>
<dbReference type="InterPro" id="IPR019553">
    <property type="entry name" value="Spider_toxin_CSTX_knottin"/>
</dbReference>
<dbReference type="InterPro" id="IPR011142">
    <property type="entry name" value="Spider_toxin_CSTX_Knottin_CS"/>
</dbReference>
<dbReference type="Pfam" id="PF10530">
    <property type="entry name" value="Toxin_35"/>
    <property type="match status" value="1"/>
</dbReference>
<dbReference type="PROSITE" id="PS60029">
    <property type="entry name" value="SPIDER_CSTX"/>
    <property type="match status" value="1"/>
</dbReference>